<feature type="signal peptide" evidence="1">
    <location>
        <begin position="1"/>
        <end position="30"/>
    </location>
</feature>
<feature type="chain" id="PRO_0000011794" description="Beta-glucanase">
    <location>
        <begin position="31"/>
        <end position="286"/>
    </location>
</feature>
<feature type="domain" description="GH16" evidence="2">
    <location>
        <begin position="48"/>
        <end position="286"/>
    </location>
</feature>
<feature type="active site" description="Nucleophile" evidence="3">
    <location>
        <position position="158"/>
    </location>
</feature>
<feature type="active site" description="Proton donor" evidence="3">
    <location>
        <position position="163"/>
    </location>
</feature>
<reference key="1">
    <citation type="journal article" date="1994" name="Eur. J. Biochem.">
        <title>Cloning and sequencing of a Rhodothermus marinus gene, bglA, coding for a thermostable beta-glucanase and its expression in Escherichia coli.</title>
        <authorList>
            <person name="Spilliaert R."/>
            <person name="Hreggvidsson G.O."/>
            <person name="Kristjansson J.K."/>
            <person name="Eggertsson G."/>
            <person name="Palsdottir A."/>
        </authorList>
    </citation>
    <scope>NUCLEOTIDE SEQUENCE [GENOMIC DNA]</scope>
    <source>
        <strain>21 / ITI-378</strain>
    </source>
</reference>
<protein>
    <recommendedName>
        <fullName>Beta-glucanase</fullName>
        <ecNumber>3.2.1.73</ecNumber>
    </recommendedName>
    <alternativeName>
        <fullName>1,3-1,4-beta-D-glucan 4-glucanohydrolase</fullName>
    </alternativeName>
    <alternativeName>
        <fullName>Endo-beta-1,3-1,4 glucanase</fullName>
    </alternativeName>
    <alternativeName>
        <fullName>Lichenase</fullName>
    </alternativeName>
</protein>
<organism>
    <name type="scientific">Rhodothermus marinus</name>
    <name type="common">Rhodothermus obamensis</name>
    <dbReference type="NCBI Taxonomy" id="29549"/>
    <lineage>
        <taxon>Bacteria</taxon>
        <taxon>Pseudomonadati</taxon>
        <taxon>Rhodothermota</taxon>
        <taxon>Rhodothermia</taxon>
        <taxon>Rhodothermales</taxon>
        <taxon>Rhodothermaceae</taxon>
        <taxon>Rhodothermus</taxon>
    </lineage>
</organism>
<accession>P45798</accession>
<evidence type="ECO:0000255" key="1"/>
<evidence type="ECO:0000255" key="2">
    <source>
        <dbReference type="PROSITE-ProRule" id="PRU01098"/>
    </source>
</evidence>
<evidence type="ECO:0000255" key="3">
    <source>
        <dbReference type="PROSITE-ProRule" id="PRU10064"/>
    </source>
</evidence>
<evidence type="ECO:0000305" key="4"/>
<comment type="function">
    <text>Shows activity on lichenan, beta-glucan and laminarin but not on CMC cellulose or xylan.</text>
</comment>
<comment type="catalytic activity">
    <reaction>
        <text>Hydrolysis of (1-&gt;4)-beta-D-glucosidic linkages in beta-D-glucans containing (1-&gt;3)- and (1-&gt;4)-bonds.</text>
        <dbReference type="EC" id="3.2.1.73"/>
    </reaction>
</comment>
<comment type="biophysicochemical properties">
    <phDependence>
        <text>Optimum pH is 7.0.</text>
    </phDependence>
    <temperatureDependence>
        <text>Optimum temperature is 85 degrees Celsius.</text>
    </temperatureDependence>
</comment>
<comment type="similarity">
    <text evidence="4">Belongs to the glycosyl hydrolase 16 family.</text>
</comment>
<keyword id="KW-0326">Glycosidase</keyword>
<keyword id="KW-0378">Hydrolase</keyword>
<keyword id="KW-0732">Signal</keyword>
<dbReference type="EC" id="3.2.1.73"/>
<dbReference type="EMBL" id="U04836">
    <property type="protein sequence ID" value="AAA60459.1"/>
    <property type="molecule type" value="Genomic_DNA"/>
</dbReference>
<dbReference type="PIR" id="S48201">
    <property type="entry name" value="S48201"/>
</dbReference>
<dbReference type="SMR" id="P45798"/>
<dbReference type="CAZy" id="GH16">
    <property type="family name" value="Glycoside Hydrolase Family 16"/>
</dbReference>
<dbReference type="BRENDA" id="3.2.1.73">
    <property type="organism ID" value="5425"/>
</dbReference>
<dbReference type="GO" id="GO:0042972">
    <property type="term" value="F:licheninase activity"/>
    <property type="evidence" value="ECO:0007669"/>
    <property type="project" value="UniProtKB-EC"/>
</dbReference>
<dbReference type="GO" id="GO:0005975">
    <property type="term" value="P:carbohydrate metabolic process"/>
    <property type="evidence" value="ECO:0007669"/>
    <property type="project" value="InterPro"/>
</dbReference>
<dbReference type="CDD" id="cd08023">
    <property type="entry name" value="GH16_laminarinase_like"/>
    <property type="match status" value="1"/>
</dbReference>
<dbReference type="Gene3D" id="2.60.120.200">
    <property type="match status" value="1"/>
</dbReference>
<dbReference type="InterPro" id="IPR013320">
    <property type="entry name" value="ConA-like_dom_sf"/>
</dbReference>
<dbReference type="InterPro" id="IPR000757">
    <property type="entry name" value="GH16"/>
</dbReference>
<dbReference type="InterPro" id="IPR008263">
    <property type="entry name" value="GH16_AS"/>
</dbReference>
<dbReference type="InterPro" id="IPR050546">
    <property type="entry name" value="Glycosyl_Hydrlase_16"/>
</dbReference>
<dbReference type="PANTHER" id="PTHR10963:SF55">
    <property type="entry name" value="GLYCOSIDE HYDROLASE FAMILY 16 PROTEIN"/>
    <property type="match status" value="1"/>
</dbReference>
<dbReference type="PANTHER" id="PTHR10963">
    <property type="entry name" value="GLYCOSYL HYDROLASE-RELATED"/>
    <property type="match status" value="1"/>
</dbReference>
<dbReference type="Pfam" id="PF00722">
    <property type="entry name" value="Glyco_hydro_16"/>
    <property type="match status" value="1"/>
</dbReference>
<dbReference type="SUPFAM" id="SSF49899">
    <property type="entry name" value="Concanavalin A-like lectins/glucanases"/>
    <property type="match status" value="1"/>
</dbReference>
<dbReference type="PROSITE" id="PS01034">
    <property type="entry name" value="GH16_1"/>
    <property type="match status" value="1"/>
</dbReference>
<dbReference type="PROSITE" id="PS51762">
    <property type="entry name" value="GH16_2"/>
    <property type="match status" value="1"/>
</dbReference>
<sequence>MCTMPLMKLKKMMRRTAFLLSVLIGCSMLGSDRSDKAPHWELVWSDEFDYSGLPDPEKWDYDVGGHGWGNQELQYYTRARIENARVGGGVLIIEARHEPYEGREYTSARLVTRGKASWTYGRFEIRARLPSGRGTWPAIWMLPDRQTYGSAYWPDNGEIDIMEHVGFNPDVVHGTVHTKAYNHLLGTQRGGSIRVPTARTDFHVYAIEWTPEEIRWFVDDSLYYRFPNERLTDPEADWRHWPFDQPFHLIMNIAVGGAWGGQQGVDPEAFPAQLVVDYVRVYRWVE</sequence>
<proteinExistence type="evidence at protein level"/>
<name>GUB_RHOMR</name>
<gene>
    <name type="primary">bglA</name>
</gene>